<feature type="chain" id="PRO_0000264320" description="Protein-glutamate methylesterase/protein-glutamine glutaminase">
    <location>
        <begin position="1"/>
        <end position="398"/>
    </location>
</feature>
<feature type="domain" description="Response regulatory" evidence="1">
    <location>
        <begin position="4"/>
        <end position="121"/>
    </location>
</feature>
<feature type="domain" description="CheB-type methylesterase" evidence="1">
    <location>
        <begin position="205"/>
        <end position="398"/>
    </location>
</feature>
<feature type="region of interest" description="Disordered" evidence="2">
    <location>
        <begin position="133"/>
        <end position="200"/>
    </location>
</feature>
<feature type="compositionally biased region" description="Polar residues" evidence="2">
    <location>
        <begin position="136"/>
        <end position="146"/>
    </location>
</feature>
<feature type="compositionally biased region" description="Polar residues" evidence="2">
    <location>
        <begin position="168"/>
        <end position="200"/>
    </location>
</feature>
<feature type="active site" evidence="1">
    <location>
        <position position="217"/>
    </location>
</feature>
<feature type="active site" evidence="1">
    <location>
        <position position="244"/>
    </location>
</feature>
<feature type="active site" evidence="1">
    <location>
        <position position="340"/>
    </location>
</feature>
<feature type="modified residue" description="4-aspartylphosphate" evidence="1">
    <location>
        <position position="55"/>
    </location>
</feature>
<protein>
    <recommendedName>
        <fullName evidence="1">Protein-glutamate methylesterase/protein-glutamine glutaminase</fullName>
        <ecNumber evidence="1">3.1.1.61</ecNumber>
        <ecNumber evidence="1">3.5.1.44</ecNumber>
    </recommendedName>
</protein>
<name>CHEB_SHEFN</name>
<reference key="1">
    <citation type="submission" date="2006-08" db="EMBL/GenBank/DDBJ databases">
        <title>Complete sequence of Shewanella frigidimarina NCIMB 400.</title>
        <authorList>
            <consortium name="US DOE Joint Genome Institute"/>
            <person name="Copeland A."/>
            <person name="Lucas S."/>
            <person name="Lapidus A."/>
            <person name="Barry K."/>
            <person name="Detter J.C."/>
            <person name="Glavina del Rio T."/>
            <person name="Hammon N."/>
            <person name="Israni S."/>
            <person name="Dalin E."/>
            <person name="Tice H."/>
            <person name="Pitluck S."/>
            <person name="Fredrickson J.K."/>
            <person name="Kolker E."/>
            <person name="McCuel L.A."/>
            <person name="DiChristina T."/>
            <person name="Nealson K.H."/>
            <person name="Newman D."/>
            <person name="Tiedje J.M."/>
            <person name="Zhou J."/>
            <person name="Romine M.F."/>
            <person name="Culley D.E."/>
            <person name="Serres M."/>
            <person name="Chertkov O."/>
            <person name="Brettin T."/>
            <person name="Bruce D."/>
            <person name="Han C."/>
            <person name="Tapia R."/>
            <person name="Gilna P."/>
            <person name="Schmutz J."/>
            <person name="Larimer F."/>
            <person name="Land M."/>
            <person name="Hauser L."/>
            <person name="Kyrpides N."/>
            <person name="Mikhailova N."/>
            <person name="Richardson P."/>
        </authorList>
    </citation>
    <scope>NUCLEOTIDE SEQUENCE [LARGE SCALE GENOMIC DNA]</scope>
    <source>
        <strain>NCIMB 400</strain>
    </source>
</reference>
<dbReference type="EC" id="3.1.1.61" evidence="1"/>
<dbReference type="EC" id="3.5.1.44" evidence="1"/>
<dbReference type="EMBL" id="CP000447">
    <property type="protein sequence ID" value="ABI71056.1"/>
    <property type="molecule type" value="Genomic_DNA"/>
</dbReference>
<dbReference type="RefSeq" id="WP_011636677.1">
    <property type="nucleotide sequence ID" value="NC_008345.1"/>
</dbReference>
<dbReference type="SMR" id="Q085K9"/>
<dbReference type="STRING" id="318167.Sfri_1203"/>
<dbReference type="KEGG" id="sfr:Sfri_1203"/>
<dbReference type="eggNOG" id="COG2201">
    <property type="taxonomic scope" value="Bacteria"/>
</dbReference>
<dbReference type="HOGENOM" id="CLU_000445_51_0_6"/>
<dbReference type="OrthoDB" id="9793421at2"/>
<dbReference type="Proteomes" id="UP000000684">
    <property type="component" value="Chromosome"/>
</dbReference>
<dbReference type="GO" id="GO:0005737">
    <property type="term" value="C:cytoplasm"/>
    <property type="evidence" value="ECO:0007669"/>
    <property type="project" value="UniProtKB-SubCell"/>
</dbReference>
<dbReference type="GO" id="GO:0000156">
    <property type="term" value="F:phosphorelay response regulator activity"/>
    <property type="evidence" value="ECO:0007669"/>
    <property type="project" value="InterPro"/>
</dbReference>
<dbReference type="GO" id="GO:0008984">
    <property type="term" value="F:protein-glutamate methylesterase activity"/>
    <property type="evidence" value="ECO:0007669"/>
    <property type="project" value="UniProtKB-UniRule"/>
</dbReference>
<dbReference type="GO" id="GO:0050568">
    <property type="term" value="F:protein-glutamine glutaminase activity"/>
    <property type="evidence" value="ECO:0007669"/>
    <property type="project" value="UniProtKB-UniRule"/>
</dbReference>
<dbReference type="GO" id="GO:0006935">
    <property type="term" value="P:chemotaxis"/>
    <property type="evidence" value="ECO:0007669"/>
    <property type="project" value="UniProtKB-UniRule"/>
</dbReference>
<dbReference type="CDD" id="cd16432">
    <property type="entry name" value="CheB_Rec"/>
    <property type="match status" value="1"/>
</dbReference>
<dbReference type="CDD" id="cd17541">
    <property type="entry name" value="REC_CheB-like"/>
    <property type="match status" value="1"/>
</dbReference>
<dbReference type="FunFam" id="3.40.50.2300:FF:000077">
    <property type="entry name" value="Chemotaxis response regulator"/>
    <property type="match status" value="1"/>
</dbReference>
<dbReference type="FunFam" id="3.40.50.180:FF:000001">
    <property type="entry name" value="Protein-glutamate methylesterase/protein-glutamine glutaminase"/>
    <property type="match status" value="1"/>
</dbReference>
<dbReference type="Gene3D" id="3.40.50.2300">
    <property type="match status" value="1"/>
</dbReference>
<dbReference type="Gene3D" id="3.40.50.180">
    <property type="entry name" value="Methylesterase CheB, C-terminal domain"/>
    <property type="match status" value="1"/>
</dbReference>
<dbReference type="HAMAP" id="MF_00099">
    <property type="entry name" value="CheB_chemtxs"/>
    <property type="match status" value="1"/>
</dbReference>
<dbReference type="InterPro" id="IPR008248">
    <property type="entry name" value="CheB-like"/>
</dbReference>
<dbReference type="InterPro" id="IPR035909">
    <property type="entry name" value="CheB_C"/>
</dbReference>
<dbReference type="InterPro" id="IPR011006">
    <property type="entry name" value="CheY-like_superfamily"/>
</dbReference>
<dbReference type="InterPro" id="IPR000673">
    <property type="entry name" value="Sig_transdc_resp-reg_Me-estase"/>
</dbReference>
<dbReference type="InterPro" id="IPR001789">
    <property type="entry name" value="Sig_transdc_resp-reg_receiver"/>
</dbReference>
<dbReference type="NCBIfam" id="NF001965">
    <property type="entry name" value="PRK00742.1"/>
    <property type="match status" value="1"/>
</dbReference>
<dbReference type="PANTHER" id="PTHR42872">
    <property type="entry name" value="PROTEIN-GLUTAMATE METHYLESTERASE/PROTEIN-GLUTAMINE GLUTAMINASE"/>
    <property type="match status" value="1"/>
</dbReference>
<dbReference type="PANTHER" id="PTHR42872:SF3">
    <property type="entry name" value="PROTEIN-GLUTAMATE METHYLESTERASE_PROTEIN-GLUTAMINE GLUTAMINASE 1"/>
    <property type="match status" value="1"/>
</dbReference>
<dbReference type="Pfam" id="PF01339">
    <property type="entry name" value="CheB_methylest"/>
    <property type="match status" value="1"/>
</dbReference>
<dbReference type="Pfam" id="PF00072">
    <property type="entry name" value="Response_reg"/>
    <property type="match status" value="1"/>
</dbReference>
<dbReference type="PIRSF" id="PIRSF000876">
    <property type="entry name" value="RR_chemtxs_CheB"/>
    <property type="match status" value="1"/>
</dbReference>
<dbReference type="SMART" id="SM00448">
    <property type="entry name" value="REC"/>
    <property type="match status" value="1"/>
</dbReference>
<dbReference type="SUPFAM" id="SSF52172">
    <property type="entry name" value="CheY-like"/>
    <property type="match status" value="1"/>
</dbReference>
<dbReference type="SUPFAM" id="SSF52738">
    <property type="entry name" value="Methylesterase CheB, C-terminal domain"/>
    <property type="match status" value="1"/>
</dbReference>
<dbReference type="PROSITE" id="PS50122">
    <property type="entry name" value="CHEB"/>
    <property type="match status" value="1"/>
</dbReference>
<dbReference type="PROSITE" id="PS50110">
    <property type="entry name" value="RESPONSE_REGULATORY"/>
    <property type="match status" value="1"/>
</dbReference>
<accession>Q085K9</accession>
<evidence type="ECO:0000255" key="1">
    <source>
        <dbReference type="HAMAP-Rule" id="MF_00099"/>
    </source>
</evidence>
<evidence type="ECO:0000256" key="2">
    <source>
        <dbReference type="SAM" id="MobiDB-lite"/>
    </source>
</evidence>
<organism>
    <name type="scientific">Shewanella frigidimarina (strain NCIMB 400)</name>
    <dbReference type="NCBI Taxonomy" id="318167"/>
    <lineage>
        <taxon>Bacteria</taxon>
        <taxon>Pseudomonadati</taxon>
        <taxon>Pseudomonadota</taxon>
        <taxon>Gammaproteobacteria</taxon>
        <taxon>Alteromonadales</taxon>
        <taxon>Shewanellaceae</taxon>
        <taxon>Shewanella</taxon>
    </lineage>
</organism>
<keyword id="KW-0145">Chemotaxis</keyword>
<keyword id="KW-0963">Cytoplasm</keyword>
<keyword id="KW-0378">Hydrolase</keyword>
<keyword id="KW-0597">Phosphoprotein</keyword>
<keyword id="KW-1185">Reference proteome</keyword>
<comment type="function">
    <text evidence="1">Involved in chemotaxis. Part of a chemotaxis signal transduction system that modulates chemotaxis in response to various stimuli. Catalyzes the demethylation of specific methylglutamate residues introduced into the chemoreceptors (methyl-accepting chemotaxis proteins or MCP) by CheR. Also mediates the irreversible deamidation of specific glutamine residues to glutamic acid.</text>
</comment>
<comment type="catalytic activity">
    <reaction evidence="1">
        <text>[protein]-L-glutamate 5-O-methyl ester + H2O = L-glutamyl-[protein] + methanol + H(+)</text>
        <dbReference type="Rhea" id="RHEA:23236"/>
        <dbReference type="Rhea" id="RHEA-COMP:10208"/>
        <dbReference type="Rhea" id="RHEA-COMP:10311"/>
        <dbReference type="ChEBI" id="CHEBI:15377"/>
        <dbReference type="ChEBI" id="CHEBI:15378"/>
        <dbReference type="ChEBI" id="CHEBI:17790"/>
        <dbReference type="ChEBI" id="CHEBI:29973"/>
        <dbReference type="ChEBI" id="CHEBI:82795"/>
        <dbReference type="EC" id="3.1.1.61"/>
    </reaction>
</comment>
<comment type="catalytic activity">
    <reaction evidence="1">
        <text>L-glutaminyl-[protein] + H2O = L-glutamyl-[protein] + NH4(+)</text>
        <dbReference type="Rhea" id="RHEA:16441"/>
        <dbReference type="Rhea" id="RHEA-COMP:10207"/>
        <dbReference type="Rhea" id="RHEA-COMP:10208"/>
        <dbReference type="ChEBI" id="CHEBI:15377"/>
        <dbReference type="ChEBI" id="CHEBI:28938"/>
        <dbReference type="ChEBI" id="CHEBI:29973"/>
        <dbReference type="ChEBI" id="CHEBI:30011"/>
        <dbReference type="EC" id="3.5.1.44"/>
    </reaction>
</comment>
<comment type="subcellular location">
    <subcellularLocation>
        <location evidence="1">Cytoplasm</location>
    </subcellularLocation>
</comment>
<comment type="domain">
    <text evidence="1">Contains a C-terminal catalytic domain, and an N-terminal region which modulates catalytic activity.</text>
</comment>
<comment type="PTM">
    <text evidence="1">Phosphorylated by CheA. Phosphorylation of the N-terminal regulatory domain activates the methylesterase activity.</text>
</comment>
<comment type="similarity">
    <text evidence="1">Belongs to the CheB family.</text>
</comment>
<sequence>MAIKVLVVDDSSFFRRRVSEIVNQDPDLEVVAVAVNGKEAVEMAAKLKPQVITMDIEMPVMDGITAVREIMANNPTPILMFSSLTHDGAKATLDALEAGALDFLPKRFEDIATNKDDAILLLQQRIKALGRRRMYRSSSLTPTSTIESRRSTIAAPETNTPRRPLSSRLASTTTPVATRSSLSTTSADRHSANPTTSSISSIRASGKQYKLLLIGTSTGGPVALQKVLTAFPANYPHPIVLIQHMPAAFTPAFAARLNTLCKIEVKEAENGDVMRPGCAYLAPGGMQLMIERSGISGRLKVISGTQEMNYKPCVDITFASASKAFGGDVLAVVLTGMGADGREGARMLKSVGATIWAQDEASCVVYGMPQAVASTGISTHSISLDNMAEAILKESSRG</sequence>
<proteinExistence type="inferred from homology"/>
<gene>
    <name evidence="1" type="primary">cheB</name>
    <name type="ordered locus">Sfri_1203</name>
</gene>